<protein>
    <recommendedName>
        <fullName evidence="5">Cysteine protease atg4</fullName>
        <ecNumber evidence="2">3.4.22.-</ecNumber>
    </recommendedName>
    <alternativeName>
        <fullName>Autophagy-related protein 4</fullName>
    </alternativeName>
</protein>
<proteinExistence type="inferred from homology"/>
<reference key="1">
    <citation type="journal article" date="2003" name="J. Biol. Chem.">
        <title>Macroautophagy is required for multicellular development of the social amoeba Dictyostelium discoideum.</title>
        <authorList>
            <person name="Otto G.P."/>
            <person name="Wu M.Y."/>
            <person name="Kazgan N."/>
            <person name="Anderson O.R."/>
            <person name="Kessin R.H."/>
        </authorList>
    </citation>
    <scope>NUCLEOTIDE SEQUENCE [GENOMIC DNA]</scope>
    <scope>FUNCTION</scope>
    <source>
        <strain>AX3 / DH1</strain>
    </source>
</reference>
<reference key="2">
    <citation type="journal article" date="2002" name="Nature">
        <title>Sequence and analysis of chromosome 2 of Dictyostelium discoideum.</title>
        <authorList>
            <person name="Gloeckner G."/>
            <person name="Eichinger L."/>
            <person name="Szafranski K."/>
            <person name="Pachebat J.A."/>
            <person name="Bankier A.T."/>
            <person name="Dear P.H."/>
            <person name="Lehmann R."/>
            <person name="Baumgart C."/>
            <person name="Parra G."/>
            <person name="Abril J.F."/>
            <person name="Guigo R."/>
            <person name="Kumpf K."/>
            <person name="Tunggal B."/>
            <person name="Cox E.C."/>
            <person name="Quail M.A."/>
            <person name="Platzer M."/>
            <person name="Rosenthal A."/>
            <person name="Noegel A.A."/>
        </authorList>
    </citation>
    <scope>NUCLEOTIDE SEQUENCE [LARGE SCALE GENOMIC DNA]</scope>
    <source>
        <strain>AX4</strain>
    </source>
</reference>
<reference key="3">
    <citation type="journal article" date="2005" name="Nature">
        <title>The genome of the social amoeba Dictyostelium discoideum.</title>
        <authorList>
            <person name="Eichinger L."/>
            <person name="Pachebat J.A."/>
            <person name="Gloeckner G."/>
            <person name="Rajandream M.A."/>
            <person name="Sucgang R."/>
            <person name="Berriman M."/>
            <person name="Song J."/>
            <person name="Olsen R."/>
            <person name="Szafranski K."/>
            <person name="Xu Q."/>
            <person name="Tunggal B."/>
            <person name="Kummerfeld S."/>
            <person name="Madera M."/>
            <person name="Konfortov B.A."/>
            <person name="Rivero F."/>
            <person name="Bankier A.T."/>
            <person name="Lehmann R."/>
            <person name="Hamlin N."/>
            <person name="Davies R."/>
            <person name="Gaudet P."/>
            <person name="Fey P."/>
            <person name="Pilcher K."/>
            <person name="Chen G."/>
            <person name="Saunders D."/>
            <person name="Sodergren E.J."/>
            <person name="Davis P."/>
            <person name="Kerhornou A."/>
            <person name="Nie X."/>
            <person name="Hall N."/>
            <person name="Anjard C."/>
            <person name="Hemphill L."/>
            <person name="Bason N."/>
            <person name="Farbrother P."/>
            <person name="Desany B."/>
            <person name="Just E."/>
            <person name="Morio T."/>
            <person name="Rost R."/>
            <person name="Churcher C.M."/>
            <person name="Cooper J."/>
            <person name="Haydock S."/>
            <person name="van Driessche N."/>
            <person name="Cronin A."/>
            <person name="Goodhead I."/>
            <person name="Muzny D.M."/>
            <person name="Mourier T."/>
            <person name="Pain A."/>
            <person name="Lu M."/>
            <person name="Harper D."/>
            <person name="Lindsay R."/>
            <person name="Hauser H."/>
            <person name="James K.D."/>
            <person name="Quiles M."/>
            <person name="Madan Babu M."/>
            <person name="Saito T."/>
            <person name="Buchrieser C."/>
            <person name="Wardroper A."/>
            <person name="Felder M."/>
            <person name="Thangavelu M."/>
            <person name="Johnson D."/>
            <person name="Knights A."/>
            <person name="Loulseged H."/>
            <person name="Mungall K.L."/>
            <person name="Oliver K."/>
            <person name="Price C."/>
            <person name="Quail M.A."/>
            <person name="Urushihara H."/>
            <person name="Hernandez J."/>
            <person name="Rabbinowitsch E."/>
            <person name="Steffen D."/>
            <person name="Sanders M."/>
            <person name="Ma J."/>
            <person name="Kohara Y."/>
            <person name="Sharp S."/>
            <person name="Simmonds M.N."/>
            <person name="Spiegler S."/>
            <person name="Tivey A."/>
            <person name="Sugano S."/>
            <person name="White B."/>
            <person name="Walker D."/>
            <person name="Woodward J.R."/>
            <person name="Winckler T."/>
            <person name="Tanaka Y."/>
            <person name="Shaulsky G."/>
            <person name="Schleicher M."/>
            <person name="Weinstock G.M."/>
            <person name="Rosenthal A."/>
            <person name="Cox E.C."/>
            <person name="Chisholm R.L."/>
            <person name="Gibbs R.A."/>
            <person name="Loomis W.F."/>
            <person name="Platzer M."/>
            <person name="Kay R.R."/>
            <person name="Williams J.G."/>
            <person name="Dear P.H."/>
            <person name="Noegel A.A."/>
            <person name="Barrell B.G."/>
            <person name="Kuspa A."/>
        </authorList>
    </citation>
    <scope>NUCLEOTIDE SEQUENCE [LARGE SCALE GENOMIC DNA]</scope>
    <source>
        <strain>AX4</strain>
    </source>
</reference>
<dbReference type="EC" id="3.4.22.-" evidence="2"/>
<dbReference type="EMBL" id="AY191018">
    <property type="protein sequence ID" value="AAO39081.1"/>
    <property type="molecule type" value="Genomic_DNA"/>
</dbReference>
<dbReference type="EMBL" id="AAFI02000010">
    <property type="protein sequence ID" value="EAL70676.1"/>
    <property type="molecule type" value="Genomic_DNA"/>
</dbReference>
<dbReference type="EMBL" id="AAFI02000010">
    <property type="protein sequence ID" value="EAL70731.1"/>
    <property type="molecule type" value="Genomic_DNA"/>
</dbReference>
<dbReference type="RefSeq" id="XP_644593.1">
    <property type="nucleotide sequence ID" value="XM_639501.1"/>
</dbReference>
<dbReference type="RefSeq" id="XP_644658.1">
    <property type="nucleotide sequence ID" value="XM_639566.1"/>
</dbReference>
<dbReference type="SMR" id="Q557H7"/>
<dbReference type="STRING" id="44689.Q557H7"/>
<dbReference type="MEROPS" id="C54.A08"/>
<dbReference type="GlyGen" id="Q557H7">
    <property type="glycosylation" value="1 site"/>
</dbReference>
<dbReference type="PaxDb" id="44689-DDB0185148"/>
<dbReference type="EnsemblProtists" id="EAL70676">
    <property type="protein sequence ID" value="EAL70676"/>
    <property type="gene ID" value="DDB_G0273443"/>
</dbReference>
<dbReference type="EnsemblProtists" id="EAL70731">
    <property type="protein sequence ID" value="EAL70731"/>
    <property type="gene ID" value="DDB_G0273553"/>
</dbReference>
<dbReference type="GeneID" id="8618957"/>
<dbReference type="GeneID" id="8619020"/>
<dbReference type="KEGG" id="ddi:DDB_G0273443"/>
<dbReference type="KEGG" id="ddi:DDB_G0273553"/>
<dbReference type="dictyBase" id="DDB_G0273443">
    <property type="gene designation" value="atg4-1"/>
</dbReference>
<dbReference type="dictyBase" id="DDB_G0273553">
    <property type="gene designation" value="atg4-2"/>
</dbReference>
<dbReference type="VEuPathDB" id="AmoebaDB:DDB_G0273443"/>
<dbReference type="eggNOG" id="KOG2674">
    <property type="taxonomic scope" value="Eukaryota"/>
</dbReference>
<dbReference type="HOGENOM" id="CLU_373181_0_0_1"/>
<dbReference type="InParanoid" id="Q557H7"/>
<dbReference type="OMA" id="KIMISFY"/>
<dbReference type="PhylomeDB" id="Q557H7"/>
<dbReference type="Reactome" id="R-DDI-1632852">
    <property type="pathway name" value="Macroautophagy"/>
</dbReference>
<dbReference type="PRO" id="PR:Q557H7"/>
<dbReference type="Proteomes" id="UP000002195">
    <property type="component" value="Chromosome 2"/>
</dbReference>
<dbReference type="GO" id="GO:0005737">
    <property type="term" value="C:cytoplasm"/>
    <property type="evidence" value="ECO:0000318"/>
    <property type="project" value="GO_Central"/>
</dbReference>
<dbReference type="GO" id="GO:0004197">
    <property type="term" value="F:cysteine-type endopeptidase activity"/>
    <property type="evidence" value="ECO:0000318"/>
    <property type="project" value="GO_Central"/>
</dbReference>
<dbReference type="GO" id="GO:0019786">
    <property type="term" value="F:protein-phosphatidylethanolamide deconjugating activity"/>
    <property type="evidence" value="ECO:0000318"/>
    <property type="project" value="GO_Central"/>
</dbReference>
<dbReference type="GO" id="GO:0035973">
    <property type="term" value="P:aggrephagy"/>
    <property type="evidence" value="ECO:0000318"/>
    <property type="project" value="GO_Central"/>
</dbReference>
<dbReference type="GO" id="GO:0000045">
    <property type="term" value="P:autophagosome assembly"/>
    <property type="evidence" value="ECO:0000318"/>
    <property type="project" value="GO_Central"/>
</dbReference>
<dbReference type="GO" id="GO:0006914">
    <property type="term" value="P:autophagy"/>
    <property type="evidence" value="ECO:0000250"/>
    <property type="project" value="dictyBase"/>
</dbReference>
<dbReference type="GO" id="GO:0000423">
    <property type="term" value="P:mitophagy"/>
    <property type="evidence" value="ECO:0000318"/>
    <property type="project" value="GO_Central"/>
</dbReference>
<dbReference type="GO" id="GO:0034727">
    <property type="term" value="P:piecemeal microautophagy of the nucleus"/>
    <property type="evidence" value="ECO:0000318"/>
    <property type="project" value="GO_Central"/>
</dbReference>
<dbReference type="GO" id="GO:0016485">
    <property type="term" value="P:protein processing"/>
    <property type="evidence" value="ECO:0000318"/>
    <property type="project" value="GO_Central"/>
</dbReference>
<dbReference type="GO" id="GO:0015031">
    <property type="term" value="P:protein transport"/>
    <property type="evidence" value="ECO:0007669"/>
    <property type="project" value="UniProtKB-KW"/>
</dbReference>
<dbReference type="GO" id="GO:0006508">
    <property type="term" value="P:proteolysis"/>
    <property type="evidence" value="ECO:0000250"/>
    <property type="project" value="dictyBase"/>
</dbReference>
<dbReference type="InterPro" id="IPR038765">
    <property type="entry name" value="Papain-like_cys_pep_sf"/>
</dbReference>
<dbReference type="InterPro" id="IPR005078">
    <property type="entry name" value="Peptidase_C54"/>
</dbReference>
<dbReference type="InterPro" id="IPR046792">
    <property type="entry name" value="Peptidase_C54_cat"/>
</dbReference>
<dbReference type="PANTHER" id="PTHR22624">
    <property type="entry name" value="CYSTEINE PROTEASE ATG4"/>
    <property type="match status" value="1"/>
</dbReference>
<dbReference type="PANTHER" id="PTHR22624:SF58">
    <property type="entry name" value="CYSTEINE PROTEASE ATG4"/>
    <property type="match status" value="1"/>
</dbReference>
<dbReference type="Pfam" id="PF03416">
    <property type="entry name" value="Peptidase_C54"/>
    <property type="match status" value="1"/>
</dbReference>
<dbReference type="SUPFAM" id="SSF54001">
    <property type="entry name" value="Cysteine proteinases"/>
    <property type="match status" value="1"/>
</dbReference>
<sequence>MFTKYSHHNGYQDGSHLQPFQYQQQTYNQQSYLRQQQQAPQQISYGFNQPNSPTSSSSTPSSSTAMGNSFQNQRQINLQQQQQQEQFLQEQVFYQQQLLQQQSQIKEQQRQKEQKQKTNILNIYKEGKQKIMMSFYNLYRNYPTEPPHFSPSPIWLMGRCYTSKDNNSNNNSNNNQVPQTQPTQLQQSIGIFQNNNSNSNNNNNHNNNHNNNNNNLTTDLIYRPAIESGFLSDVASMIWFSYRKDFPPIENTNITTDIGWGCMLRTGQMILARALIKHLYKENDMVPEIERKKPHSNYSQVLAWFSDYPSKEHVYGIHQIVNKKQAMEKNNRKQQILREQVISLNRGGGGSSKGKKKKEKEEEINDNVEEWLAPTRISNILRQLIKFQHLEDLEMYVPTDGVIYKDYINNLCNNSNTHNHYQIIQQQLQHLREQQNIQQNNNKNNNNNNPTTTTTTTTTATSSNNNNNQSPPSRVPNGYNNQVFDDESLFDYNTAISSIPPKWKSLIIMIPLKLGADKLNSTYIEKLKLLLKLPQSLGFIGGKPKQSFYFIGFQDDQVIYLDPHFVQESVNPNSFDYSNTYSGCIPQKMPFTQLDPSLSIGFYCRDQASFEDLCDRLSVINNCEFPIISVCQKLPDYQIECELVDDYAESETTEMLAITIANGGNNHSCIPENIVVDDEEFIVHHHIPYNPNNNQNNNQNNNNNNNKNNNNNTNQQQTPNYPPKLNTYQPDFSSDGEIDDFTMVG</sequence>
<organism>
    <name type="scientific">Dictyostelium discoideum</name>
    <name type="common">Social amoeba</name>
    <dbReference type="NCBI Taxonomy" id="44689"/>
    <lineage>
        <taxon>Eukaryota</taxon>
        <taxon>Amoebozoa</taxon>
        <taxon>Evosea</taxon>
        <taxon>Eumycetozoa</taxon>
        <taxon>Dictyostelia</taxon>
        <taxon>Dictyosteliales</taxon>
        <taxon>Dictyosteliaceae</taxon>
        <taxon>Dictyostelium</taxon>
    </lineage>
</organism>
<name>ATG4_DICDI</name>
<feature type="chain" id="PRO_0000327587" description="Cysteine protease atg4">
    <location>
        <begin position="1"/>
        <end position="745"/>
    </location>
</feature>
<feature type="region of interest" description="Disordered" evidence="3">
    <location>
        <begin position="29"/>
        <end position="68"/>
    </location>
</feature>
<feature type="region of interest" description="Disordered" evidence="3">
    <location>
        <begin position="192"/>
        <end position="215"/>
    </location>
</feature>
<feature type="region of interest" description="Disordered" evidence="3">
    <location>
        <begin position="344"/>
        <end position="363"/>
    </location>
</feature>
<feature type="region of interest" description="Disordered" evidence="3">
    <location>
        <begin position="439"/>
        <end position="480"/>
    </location>
</feature>
<feature type="region of interest" description="Disordered" evidence="3">
    <location>
        <begin position="686"/>
        <end position="745"/>
    </location>
</feature>
<feature type="compositionally biased region" description="Low complexity" evidence="3">
    <location>
        <begin position="29"/>
        <end position="42"/>
    </location>
</feature>
<feature type="compositionally biased region" description="Low complexity" evidence="3">
    <location>
        <begin position="52"/>
        <end position="64"/>
    </location>
</feature>
<feature type="compositionally biased region" description="Low complexity" evidence="3">
    <location>
        <begin position="194"/>
        <end position="215"/>
    </location>
</feature>
<feature type="compositionally biased region" description="Low complexity" evidence="3">
    <location>
        <begin position="439"/>
        <end position="477"/>
    </location>
</feature>
<feature type="compositionally biased region" description="Low complexity" evidence="3">
    <location>
        <begin position="688"/>
        <end position="719"/>
    </location>
</feature>
<feature type="compositionally biased region" description="Acidic residues" evidence="3">
    <location>
        <begin position="734"/>
        <end position="745"/>
    </location>
</feature>
<feature type="active site" description="Nucleophile" evidence="2">
    <location>
        <position position="262"/>
    </location>
</feature>
<feature type="active site" evidence="2">
    <location>
        <position position="562"/>
    </location>
</feature>
<feature type="active site" evidence="2">
    <location>
        <position position="564"/>
    </location>
</feature>
<feature type="sequence conflict" description="In Ref. 1; AAO39081." evidence="5" ref="1">
    <original>T</original>
    <variation>N</variation>
    <location>
        <position position="713"/>
    </location>
</feature>
<comment type="function">
    <text evidence="2 4">Cysteine protease that plays a key role in autophagy by mediating both proteolytic activation and delipidation of ATG8 family proteins (PubMed:12626495). The protease activity is required for proteolytic activation of ATG8 family proteins: cleaves the C-terminal amino acid of ATG8 proteins to reveal a C-terminal glycine (By similarity). Exposure of the glycine at the C-terminus is essential for ATG8 proteins conjugation to phosphatidylethanolamine (PE) and insertion to membranes, which is necessary for autophagy (By similarity). In addition to the protease activity, also mediates delipidation of PE-conjugated ATG8 proteins (By similarity).</text>
</comment>
<comment type="catalytic activity">
    <reaction evidence="2">
        <text>[protein]-C-terminal L-amino acid-glycyl-phosphatidylethanolamide + H2O = [protein]-C-terminal L-amino acid-glycine + a 1,2-diacyl-sn-glycero-3-phosphoethanolamine</text>
        <dbReference type="Rhea" id="RHEA:67548"/>
        <dbReference type="Rhea" id="RHEA-COMP:17323"/>
        <dbReference type="Rhea" id="RHEA-COMP:17324"/>
        <dbReference type="ChEBI" id="CHEBI:15377"/>
        <dbReference type="ChEBI" id="CHEBI:64612"/>
        <dbReference type="ChEBI" id="CHEBI:172940"/>
        <dbReference type="ChEBI" id="CHEBI:172941"/>
    </reaction>
    <physiologicalReaction direction="left-to-right" evidence="2">
        <dbReference type="Rhea" id="RHEA:67549"/>
    </physiologicalReaction>
</comment>
<comment type="subcellular location">
    <subcellularLocation>
        <location evidence="1">Cytoplasm</location>
    </subcellularLocation>
</comment>
<comment type="similarity">
    <text evidence="5">Belongs to the peptidase C54 family.</text>
</comment>
<comment type="caution">
    <text evidence="5">The gene for this protein is duplicated in strains AX3 and AX4. These strains contain a duplication of a segment of 750 kb of chromosome 2 compared to the corresponding sequence in strain AX2.</text>
</comment>
<gene>
    <name type="primary">atg4-1</name>
    <name type="synonym">apg4-1</name>
    <name type="ORF">DDB_G0273443</name>
</gene>
<gene>
    <name type="primary">atg4-2</name>
    <name type="synonym">apg4-2</name>
    <name type="ORF">DDB_G0273553</name>
</gene>
<keyword id="KW-0072">Autophagy</keyword>
<keyword id="KW-0963">Cytoplasm</keyword>
<keyword id="KW-0378">Hydrolase</keyword>
<keyword id="KW-0645">Protease</keyword>
<keyword id="KW-0653">Protein transport</keyword>
<keyword id="KW-1185">Reference proteome</keyword>
<keyword id="KW-0788">Thiol protease</keyword>
<keyword id="KW-0813">Transport</keyword>
<keyword id="KW-0833">Ubl conjugation pathway</keyword>
<accession>Q557H7</accession>
<accession>Q86CR5</accession>
<evidence type="ECO:0000250" key="1">
    <source>
        <dbReference type="UniProtKB" id="Q8BGE6"/>
    </source>
</evidence>
<evidence type="ECO:0000250" key="2">
    <source>
        <dbReference type="UniProtKB" id="Q9Y4P1"/>
    </source>
</evidence>
<evidence type="ECO:0000256" key="3">
    <source>
        <dbReference type="SAM" id="MobiDB-lite"/>
    </source>
</evidence>
<evidence type="ECO:0000269" key="4">
    <source>
    </source>
</evidence>
<evidence type="ECO:0000305" key="5"/>